<protein>
    <recommendedName>
        <fullName>GMP synthase [glutamine-hydrolyzing]</fullName>
        <ecNumber>6.3.5.2</ecNumber>
    </recommendedName>
    <alternativeName>
        <fullName>GMP synthetase</fullName>
    </alternativeName>
    <alternativeName>
        <fullName>Glutamine amidotransferase</fullName>
    </alternativeName>
</protein>
<keyword id="KW-0067">ATP-binding</keyword>
<keyword id="KW-0315">Glutamine amidotransferase</keyword>
<keyword id="KW-0332">GMP biosynthesis</keyword>
<keyword id="KW-0436">Ligase</keyword>
<keyword id="KW-0547">Nucleotide-binding</keyword>
<keyword id="KW-0614">Plasmid</keyword>
<keyword id="KW-0658">Purine biosynthesis</keyword>
<keyword id="KW-1185">Reference proteome</keyword>
<name>GUAA_BORBU</name>
<sequence length="511" mass="58064">MNTQAILVLDFGSQYSQLIARRIREIGVYTKVIPYYTPLKEIKNMNISGIILSGSPASVYSKEAPTLNMEIFNLKIPILGICYGMQIIVKLFGGLVSKDSKQEYGSSEIFLRDEKSLLFSELPNKFQIIMSHGDSIEKIPDNFKQLAFTKNCIASISNETQKIYGLQFHPEVTHSEFGDQIIKNFVFKICQAQINWSLEGNLETIVKKIKLKVGSKKVILGLSGGTDSLVCALLIKKAINENLICVFVNTGLLRKNEDKKILELKHQYDLNIKYIDASTKFLNRLKNISDPEEKRKIIGKEFVDVFEKITLEDQNIEYLAQGTIYSDVIESKSKDSSSSKIKSHHNVGGLPDKMSLKLLEPLNEFFKDEIIQIGINLGIKKESLYRHPFPGPGLAIRIIGEVTQEKINILQEADNILTEELFINDLYYQIRQAFVVLLPVKSVGVMGDQRTYEYTAVIRCVNTQDFMTAEWTELPYSFLKKVSSRIINEVRGINRVCYDISSKPPSTIEWE</sequence>
<feature type="chain" id="PRO_0000140099" description="GMP synthase [glutamine-hydrolyzing]">
    <location>
        <begin position="1"/>
        <end position="511"/>
    </location>
</feature>
<feature type="domain" description="Glutamine amidotransferase type-1">
    <location>
        <begin position="5"/>
        <end position="195"/>
    </location>
</feature>
<feature type="domain" description="GMPS ATP-PPase">
    <location>
        <begin position="196"/>
        <end position="386"/>
    </location>
</feature>
<feature type="active site" description="Nucleophile" evidence="1">
    <location>
        <position position="82"/>
    </location>
</feature>
<feature type="active site" evidence="1">
    <location>
        <position position="169"/>
    </location>
</feature>
<feature type="active site" evidence="1">
    <location>
        <position position="171"/>
    </location>
</feature>
<feature type="binding site" evidence="1">
    <location>
        <begin position="223"/>
        <end position="229"/>
    </location>
    <ligand>
        <name>ATP</name>
        <dbReference type="ChEBI" id="CHEBI:30616"/>
    </ligand>
</feature>
<feature type="sequence variant" description="In strain: CA-11.2A.">
    <original>T</original>
    <variation>A</variation>
    <location>
        <position position="3"/>
    </location>
</feature>
<feature type="sequence variant" description="In strain: CA-11.2A.">
    <original>N</original>
    <variation>D</variation>
    <location>
        <position position="68"/>
    </location>
</feature>
<feature type="sequence variant" description="In strain: CA-11.2A.">
    <original>I</original>
    <variation>V</variation>
    <location>
        <position position="78"/>
    </location>
</feature>
<feature type="sequence variant" description="In strain: CA-11.2A.">
    <original>S</original>
    <variation>R</variation>
    <location>
        <position position="106"/>
    </location>
</feature>
<feature type="sequence variant" description="In strain: CA-11.2A.">
    <original>R</original>
    <variation>K</variation>
    <location>
        <position position="112"/>
    </location>
</feature>
<feature type="sequence variant" description="In strain: CA-11.2A.">
    <original>I</original>
    <variation>L</variation>
    <location>
        <position position="182"/>
    </location>
</feature>
<feature type="sequence variant" description="In strain: CA-11.2A.">
    <original>D</original>
    <variation>N</variation>
    <location>
        <position position="258"/>
    </location>
</feature>
<dbReference type="EC" id="6.3.5.2"/>
<dbReference type="EMBL" id="L25883">
    <property type="protein sequence ID" value="AAA53232.1"/>
    <property type="status" value="ALT_INIT"/>
    <property type="molecule type" value="Genomic_DNA"/>
</dbReference>
<dbReference type="EMBL" id="AE000792">
    <property type="protein sequence ID" value="AAC66313.2"/>
    <property type="molecule type" value="Genomic_DNA"/>
</dbReference>
<dbReference type="EMBL" id="AF005937">
    <property type="protein sequence ID" value="AAC45804.1"/>
    <property type="molecule type" value="Genomic_DNA"/>
</dbReference>
<dbReference type="EMBL" id="U93693">
    <property type="protein sequence ID" value="AAC45520.1"/>
    <property type="molecule type" value="Genomic_DNA"/>
</dbReference>
<dbReference type="PIR" id="F70218">
    <property type="entry name" value="F70218"/>
</dbReference>
<dbReference type="RefSeq" id="NP_047004.2">
    <property type="nucleotide sequence ID" value="NC_001903.1"/>
</dbReference>
<dbReference type="RefSeq" id="WP_010890581.1">
    <property type="nucleotide sequence ID" value="NC_001903.1"/>
</dbReference>
<dbReference type="SMR" id="P0CL64"/>
<dbReference type="MEROPS" id="C26.957"/>
<dbReference type="EnsemblBacteria" id="AAC66313">
    <property type="protein sequence ID" value="AAC66313"/>
    <property type="gene ID" value="BB_B18"/>
</dbReference>
<dbReference type="KEGG" id="bbu:BB_B18"/>
<dbReference type="PATRIC" id="fig|224326.49.peg.1606"/>
<dbReference type="HOGENOM" id="CLU_014340_0_5_12"/>
<dbReference type="OrthoDB" id="9802219at2"/>
<dbReference type="UniPathway" id="UPA00189">
    <property type="reaction ID" value="UER00296"/>
</dbReference>
<dbReference type="Proteomes" id="UP000001807">
    <property type="component" value="Plasmid cp26"/>
</dbReference>
<dbReference type="GO" id="GO:0005829">
    <property type="term" value="C:cytosol"/>
    <property type="evidence" value="ECO:0007669"/>
    <property type="project" value="TreeGrafter"/>
</dbReference>
<dbReference type="GO" id="GO:0005524">
    <property type="term" value="F:ATP binding"/>
    <property type="evidence" value="ECO:0007669"/>
    <property type="project" value="UniProtKB-UniRule"/>
</dbReference>
<dbReference type="GO" id="GO:0003921">
    <property type="term" value="F:GMP synthase activity"/>
    <property type="evidence" value="ECO:0007669"/>
    <property type="project" value="InterPro"/>
</dbReference>
<dbReference type="CDD" id="cd01742">
    <property type="entry name" value="GATase1_GMP_Synthase"/>
    <property type="match status" value="1"/>
</dbReference>
<dbReference type="CDD" id="cd01997">
    <property type="entry name" value="GMP_synthase_C"/>
    <property type="match status" value="1"/>
</dbReference>
<dbReference type="FunFam" id="3.30.300.10:FF:000002">
    <property type="entry name" value="GMP synthase [glutamine-hydrolyzing]"/>
    <property type="match status" value="1"/>
</dbReference>
<dbReference type="FunFam" id="3.40.50.880:FF:000001">
    <property type="entry name" value="GMP synthase [glutamine-hydrolyzing]"/>
    <property type="match status" value="1"/>
</dbReference>
<dbReference type="Gene3D" id="3.30.300.10">
    <property type="match status" value="1"/>
</dbReference>
<dbReference type="Gene3D" id="3.40.50.880">
    <property type="match status" value="1"/>
</dbReference>
<dbReference type="Gene3D" id="3.40.50.620">
    <property type="entry name" value="HUPs"/>
    <property type="match status" value="1"/>
</dbReference>
<dbReference type="HAMAP" id="MF_00344">
    <property type="entry name" value="GMP_synthase"/>
    <property type="match status" value="1"/>
</dbReference>
<dbReference type="InterPro" id="IPR029062">
    <property type="entry name" value="Class_I_gatase-like"/>
</dbReference>
<dbReference type="InterPro" id="IPR017926">
    <property type="entry name" value="GATASE"/>
</dbReference>
<dbReference type="InterPro" id="IPR001674">
    <property type="entry name" value="GMP_synth_C"/>
</dbReference>
<dbReference type="InterPro" id="IPR004739">
    <property type="entry name" value="GMP_synth_GATase"/>
</dbReference>
<dbReference type="InterPro" id="IPR022955">
    <property type="entry name" value="GMP_synthase"/>
</dbReference>
<dbReference type="InterPro" id="IPR025777">
    <property type="entry name" value="GMPS_ATP_PPase_dom"/>
</dbReference>
<dbReference type="InterPro" id="IPR022310">
    <property type="entry name" value="NAD/GMP_synthase"/>
</dbReference>
<dbReference type="InterPro" id="IPR014729">
    <property type="entry name" value="Rossmann-like_a/b/a_fold"/>
</dbReference>
<dbReference type="NCBIfam" id="TIGR00884">
    <property type="entry name" value="guaA_Cterm"/>
    <property type="match status" value="1"/>
</dbReference>
<dbReference type="NCBIfam" id="TIGR00888">
    <property type="entry name" value="guaA_Nterm"/>
    <property type="match status" value="1"/>
</dbReference>
<dbReference type="NCBIfam" id="NF000848">
    <property type="entry name" value="PRK00074.1"/>
    <property type="match status" value="1"/>
</dbReference>
<dbReference type="PANTHER" id="PTHR11922:SF2">
    <property type="entry name" value="GMP SYNTHASE [GLUTAMINE-HYDROLYZING]"/>
    <property type="match status" value="1"/>
</dbReference>
<dbReference type="PANTHER" id="PTHR11922">
    <property type="entry name" value="GMP SYNTHASE-RELATED"/>
    <property type="match status" value="1"/>
</dbReference>
<dbReference type="Pfam" id="PF00117">
    <property type="entry name" value="GATase"/>
    <property type="match status" value="1"/>
</dbReference>
<dbReference type="Pfam" id="PF00958">
    <property type="entry name" value="GMP_synt_C"/>
    <property type="match status" value="1"/>
</dbReference>
<dbReference type="Pfam" id="PF02540">
    <property type="entry name" value="NAD_synthase"/>
    <property type="match status" value="1"/>
</dbReference>
<dbReference type="PRINTS" id="PR00096">
    <property type="entry name" value="GATASE"/>
</dbReference>
<dbReference type="SUPFAM" id="SSF52402">
    <property type="entry name" value="Adenine nucleotide alpha hydrolases-like"/>
    <property type="match status" value="1"/>
</dbReference>
<dbReference type="SUPFAM" id="SSF52317">
    <property type="entry name" value="Class I glutamine amidotransferase-like"/>
    <property type="match status" value="1"/>
</dbReference>
<dbReference type="SUPFAM" id="SSF54810">
    <property type="entry name" value="GMP synthetase C-terminal dimerisation domain"/>
    <property type="match status" value="1"/>
</dbReference>
<dbReference type="PROSITE" id="PS51273">
    <property type="entry name" value="GATASE_TYPE_1"/>
    <property type="match status" value="1"/>
</dbReference>
<dbReference type="PROSITE" id="PS51553">
    <property type="entry name" value="GMPS_ATP_PPASE"/>
    <property type="match status" value="1"/>
</dbReference>
<organism>
    <name type="scientific">Borreliella burgdorferi (strain ATCC 35210 / DSM 4680 / CIP 102532 / B31)</name>
    <name type="common">Borrelia burgdorferi</name>
    <dbReference type="NCBI Taxonomy" id="224326"/>
    <lineage>
        <taxon>Bacteria</taxon>
        <taxon>Pseudomonadati</taxon>
        <taxon>Spirochaetota</taxon>
        <taxon>Spirochaetia</taxon>
        <taxon>Spirochaetales</taxon>
        <taxon>Borreliaceae</taxon>
        <taxon>Borreliella</taxon>
    </lineage>
</organism>
<gene>
    <name type="primary">guaA</name>
    <name type="ordered locus">BB_B18</name>
</gene>
<evidence type="ECO:0000250" key="1"/>
<evidence type="ECO:0000305" key="2"/>
<reference key="1">
    <citation type="journal article" date="1994" name="J. Bacteriol.">
        <title>Plasmid location of Borrelia purine biosynthesis gene homologs.</title>
        <authorList>
            <person name="Margolis N."/>
            <person name="Hogan D."/>
            <person name="Tilly K."/>
            <person name="Rosa P."/>
        </authorList>
    </citation>
    <scope>NUCLEOTIDE SEQUENCE [GENOMIC DNA]</scope>
    <source>
        <strain>CA-11.2A</strain>
    </source>
</reference>
<reference key="2">
    <citation type="journal article" date="1997" name="Nature">
        <title>Genomic sequence of a Lyme disease spirochaete, Borrelia burgdorferi.</title>
        <authorList>
            <person name="Fraser C.M."/>
            <person name="Casjens S."/>
            <person name="Huang W.M."/>
            <person name="Sutton G.G."/>
            <person name="Clayton R.A."/>
            <person name="Lathigra R."/>
            <person name="White O."/>
            <person name="Ketchum K.A."/>
            <person name="Dodson R.J."/>
            <person name="Hickey E.K."/>
            <person name="Gwinn M.L."/>
            <person name="Dougherty B.A."/>
            <person name="Tomb J.-F."/>
            <person name="Fleischmann R.D."/>
            <person name="Richardson D.L."/>
            <person name="Peterson J.D."/>
            <person name="Kerlavage A.R."/>
            <person name="Quackenbush J."/>
            <person name="Salzberg S.L."/>
            <person name="Hanson M."/>
            <person name="van Vugt R."/>
            <person name="Palmer N."/>
            <person name="Adams M.D."/>
            <person name="Gocayne J.D."/>
            <person name="Weidman J.F."/>
            <person name="Utterback T.R."/>
            <person name="Watthey L."/>
            <person name="McDonald L.A."/>
            <person name="Artiach P."/>
            <person name="Bowman C."/>
            <person name="Garland S.A."/>
            <person name="Fujii C."/>
            <person name="Cotton M.D."/>
            <person name="Horst K."/>
            <person name="Roberts K.M."/>
            <person name="Hatch B."/>
            <person name="Smith H.O."/>
            <person name="Venter J.C."/>
        </authorList>
    </citation>
    <scope>NUCLEOTIDE SEQUENCE [LARGE SCALE GENOMIC DNA]</scope>
    <source>
        <strain>ATCC 35210 / DSM 4680 / CIP 102532 / B31</strain>
    </source>
</reference>
<reference key="3">
    <citation type="journal article" date="1997" name="J. Bacteriol.">
        <title>Analysis of promoters in Borrelia burgdorferi by use of a transiently expressed reporter gene.</title>
        <authorList>
            <person name="Sohaskey C.D."/>
            <person name="Arnold C."/>
            <person name="Barbour A.G."/>
        </authorList>
    </citation>
    <scope>NUCLEOTIDE SEQUENCE [GENOMIC DNA] OF 1-98</scope>
    <source>
        <strain>ATCC 35210 / DSM 4680 / CIP 102532 / B31</strain>
    </source>
</reference>
<reference key="4">
    <citation type="journal article" date="1997" name="Mol. Microbiol.">
        <title>The Borrelia burgdorferi circular plasmid cp26: conservation of plasmid structure and targeted inactivation of the ospC gene.</title>
        <authorList>
            <person name="Tilly K."/>
            <person name="Casjens S."/>
            <person name="Stevenson B."/>
            <person name="Bono J.L."/>
            <person name="Samuels D.S."/>
            <person name="Hogan D."/>
            <person name="Rosa P."/>
        </authorList>
    </citation>
    <scope>NUCLEOTIDE SEQUENCE [GENOMIC DNA] OF 1-13</scope>
    <source>
        <strain>ATCC 35210 / DSM 4680 / CIP 102532 / B31</strain>
    </source>
</reference>
<comment type="function">
    <text evidence="1">Catalyzes the synthesis of GMP from XMP.</text>
</comment>
<comment type="catalytic activity">
    <reaction>
        <text>XMP + L-glutamine + ATP + H2O = GMP + L-glutamate + AMP + diphosphate + 2 H(+)</text>
        <dbReference type="Rhea" id="RHEA:11680"/>
        <dbReference type="ChEBI" id="CHEBI:15377"/>
        <dbReference type="ChEBI" id="CHEBI:15378"/>
        <dbReference type="ChEBI" id="CHEBI:29985"/>
        <dbReference type="ChEBI" id="CHEBI:30616"/>
        <dbReference type="ChEBI" id="CHEBI:33019"/>
        <dbReference type="ChEBI" id="CHEBI:57464"/>
        <dbReference type="ChEBI" id="CHEBI:58115"/>
        <dbReference type="ChEBI" id="CHEBI:58359"/>
        <dbReference type="ChEBI" id="CHEBI:456215"/>
        <dbReference type="EC" id="6.3.5.2"/>
    </reaction>
</comment>
<comment type="pathway">
    <text>Purine metabolism; GMP biosynthesis; GMP from XMP (L-Gln route): step 1/1.</text>
</comment>
<comment type="subunit">
    <text evidence="1">Homodimer.</text>
</comment>
<comment type="sequence caution" evidence="2">
    <conflict type="erroneous initiation">
        <sequence resource="EMBL-CDS" id="AAA53232"/>
    </conflict>
    <text>Extended N-terminus.</text>
</comment>
<proteinExistence type="inferred from homology"/>
<accession>P0CL64</accession>
<accession>O30439</accession>
<accession>P49056</accession>
<geneLocation type="plasmid">
    <name>cp26</name>
    <name>circular 26 kb</name>
</geneLocation>